<name>DNLJ_BRADU</name>
<gene>
    <name evidence="1" type="primary">ligA</name>
    <name type="ordered locus">bll6591</name>
</gene>
<comment type="function">
    <text evidence="1">DNA ligase that catalyzes the formation of phosphodiester linkages between 5'-phosphoryl and 3'-hydroxyl groups in double-stranded DNA using NAD as a coenzyme and as the energy source for the reaction. It is essential for DNA replication and repair of damaged DNA.</text>
</comment>
<comment type="catalytic activity">
    <reaction evidence="1">
        <text>NAD(+) + (deoxyribonucleotide)n-3'-hydroxyl + 5'-phospho-(deoxyribonucleotide)m = (deoxyribonucleotide)n+m + AMP + beta-nicotinamide D-nucleotide.</text>
        <dbReference type="EC" id="6.5.1.2"/>
    </reaction>
</comment>
<comment type="cofactor">
    <cofactor evidence="1">
        <name>Mg(2+)</name>
        <dbReference type="ChEBI" id="CHEBI:18420"/>
    </cofactor>
    <cofactor evidence="1">
        <name>Mn(2+)</name>
        <dbReference type="ChEBI" id="CHEBI:29035"/>
    </cofactor>
</comment>
<comment type="similarity">
    <text evidence="1">Belongs to the NAD-dependent DNA ligase family. LigA subfamily.</text>
</comment>
<protein>
    <recommendedName>
        <fullName evidence="1">DNA ligase</fullName>
        <ecNumber evidence="1">6.5.1.2</ecNumber>
    </recommendedName>
    <alternativeName>
        <fullName evidence="1">Polydeoxyribonucleotide synthase [NAD(+)]</fullName>
    </alternativeName>
</protein>
<feature type="chain" id="PRO_0000313149" description="DNA ligase">
    <location>
        <begin position="1"/>
        <end position="716"/>
    </location>
</feature>
<feature type="domain" description="BRCT" evidence="1">
    <location>
        <begin position="638"/>
        <end position="716"/>
    </location>
</feature>
<feature type="active site" description="N6-AMP-lysine intermediate" evidence="1">
    <location>
        <position position="134"/>
    </location>
</feature>
<feature type="binding site" evidence="1">
    <location>
        <begin position="50"/>
        <end position="54"/>
    </location>
    <ligand>
        <name>NAD(+)</name>
        <dbReference type="ChEBI" id="CHEBI:57540"/>
    </ligand>
</feature>
<feature type="binding site" evidence="1">
    <location>
        <begin position="99"/>
        <end position="100"/>
    </location>
    <ligand>
        <name>NAD(+)</name>
        <dbReference type="ChEBI" id="CHEBI:57540"/>
    </ligand>
</feature>
<feature type="binding site" evidence="1">
    <location>
        <position position="132"/>
    </location>
    <ligand>
        <name>NAD(+)</name>
        <dbReference type="ChEBI" id="CHEBI:57540"/>
    </ligand>
</feature>
<feature type="binding site" evidence="1">
    <location>
        <position position="155"/>
    </location>
    <ligand>
        <name>NAD(+)</name>
        <dbReference type="ChEBI" id="CHEBI:57540"/>
    </ligand>
</feature>
<feature type="binding site" evidence="1">
    <location>
        <position position="192"/>
    </location>
    <ligand>
        <name>NAD(+)</name>
        <dbReference type="ChEBI" id="CHEBI:57540"/>
    </ligand>
</feature>
<feature type="binding site" evidence="1">
    <location>
        <position position="308"/>
    </location>
    <ligand>
        <name>NAD(+)</name>
        <dbReference type="ChEBI" id="CHEBI:57540"/>
    </ligand>
</feature>
<feature type="binding site" evidence="1">
    <location>
        <position position="332"/>
    </location>
    <ligand>
        <name>NAD(+)</name>
        <dbReference type="ChEBI" id="CHEBI:57540"/>
    </ligand>
</feature>
<feature type="binding site" evidence="1">
    <location>
        <position position="437"/>
    </location>
    <ligand>
        <name>Zn(2+)</name>
        <dbReference type="ChEBI" id="CHEBI:29105"/>
    </ligand>
</feature>
<feature type="binding site" evidence="1">
    <location>
        <position position="439"/>
    </location>
    <ligand>
        <name>Zn(2+)</name>
        <dbReference type="ChEBI" id="CHEBI:29105"/>
    </ligand>
</feature>
<feature type="binding site" evidence="1">
    <location>
        <position position="461"/>
    </location>
    <ligand>
        <name>Zn(2+)</name>
        <dbReference type="ChEBI" id="CHEBI:29105"/>
    </ligand>
</feature>
<feature type="binding site" evidence="1">
    <location>
        <position position="467"/>
    </location>
    <ligand>
        <name>Zn(2+)</name>
        <dbReference type="ChEBI" id="CHEBI:29105"/>
    </ligand>
</feature>
<keyword id="KW-0227">DNA damage</keyword>
<keyword id="KW-0234">DNA repair</keyword>
<keyword id="KW-0235">DNA replication</keyword>
<keyword id="KW-0436">Ligase</keyword>
<keyword id="KW-0460">Magnesium</keyword>
<keyword id="KW-0464">Manganese</keyword>
<keyword id="KW-0479">Metal-binding</keyword>
<keyword id="KW-0520">NAD</keyword>
<keyword id="KW-1185">Reference proteome</keyword>
<keyword id="KW-0862">Zinc</keyword>
<reference key="1">
    <citation type="journal article" date="2002" name="DNA Res.">
        <title>Complete genomic sequence of nitrogen-fixing symbiotic bacterium Bradyrhizobium japonicum USDA110.</title>
        <authorList>
            <person name="Kaneko T."/>
            <person name="Nakamura Y."/>
            <person name="Sato S."/>
            <person name="Minamisawa K."/>
            <person name="Uchiumi T."/>
            <person name="Sasamoto S."/>
            <person name="Watanabe A."/>
            <person name="Idesawa K."/>
            <person name="Iriguchi M."/>
            <person name="Kawashima K."/>
            <person name="Kohara M."/>
            <person name="Matsumoto M."/>
            <person name="Shimpo S."/>
            <person name="Tsuruoka H."/>
            <person name="Wada T."/>
            <person name="Yamada M."/>
            <person name="Tabata S."/>
        </authorList>
    </citation>
    <scope>NUCLEOTIDE SEQUENCE [LARGE SCALE GENOMIC DNA]</scope>
    <source>
        <strain>JCM 10833 / BCRC 13528 / IAM 13628 / NBRC 14792 / USDA 110</strain>
    </source>
</reference>
<organism>
    <name type="scientific">Bradyrhizobium diazoefficiens (strain JCM 10833 / BCRC 13528 / IAM 13628 / NBRC 14792 / USDA 110)</name>
    <dbReference type="NCBI Taxonomy" id="224911"/>
    <lineage>
        <taxon>Bacteria</taxon>
        <taxon>Pseudomonadati</taxon>
        <taxon>Pseudomonadota</taxon>
        <taxon>Alphaproteobacteria</taxon>
        <taxon>Hyphomicrobiales</taxon>
        <taxon>Nitrobacteraceae</taxon>
        <taxon>Bradyrhizobium</taxon>
    </lineage>
</organism>
<evidence type="ECO:0000255" key="1">
    <source>
        <dbReference type="HAMAP-Rule" id="MF_01588"/>
    </source>
</evidence>
<proteinExistence type="inferred from homology"/>
<dbReference type="EC" id="6.5.1.2" evidence="1"/>
<dbReference type="EMBL" id="BA000040">
    <property type="protein sequence ID" value="BAC51856.1"/>
    <property type="molecule type" value="Genomic_DNA"/>
</dbReference>
<dbReference type="RefSeq" id="NP_773231.1">
    <property type="nucleotide sequence ID" value="NC_004463.1"/>
</dbReference>
<dbReference type="SMR" id="Q89FV8"/>
<dbReference type="FunCoup" id="Q89FV8">
    <property type="interactions" value="527"/>
</dbReference>
<dbReference type="STRING" id="224911.AAV28_30535"/>
<dbReference type="EnsemblBacteria" id="BAC51856">
    <property type="protein sequence ID" value="BAC51856"/>
    <property type="gene ID" value="BAC51856"/>
</dbReference>
<dbReference type="KEGG" id="bja:bll6591"/>
<dbReference type="PATRIC" id="fig|224911.5.peg.6748"/>
<dbReference type="eggNOG" id="COG0272">
    <property type="taxonomic scope" value="Bacteria"/>
</dbReference>
<dbReference type="HOGENOM" id="CLU_007764_2_0_5"/>
<dbReference type="InParanoid" id="Q89FV8"/>
<dbReference type="OrthoDB" id="9759736at2"/>
<dbReference type="PhylomeDB" id="Q89FV8"/>
<dbReference type="Proteomes" id="UP000002526">
    <property type="component" value="Chromosome"/>
</dbReference>
<dbReference type="GO" id="GO:0005829">
    <property type="term" value="C:cytosol"/>
    <property type="evidence" value="ECO:0000318"/>
    <property type="project" value="GO_Central"/>
</dbReference>
<dbReference type="GO" id="GO:0003911">
    <property type="term" value="F:DNA ligase (NAD+) activity"/>
    <property type="evidence" value="ECO:0000318"/>
    <property type="project" value="GO_Central"/>
</dbReference>
<dbReference type="GO" id="GO:0046872">
    <property type="term" value="F:metal ion binding"/>
    <property type="evidence" value="ECO:0007669"/>
    <property type="project" value="UniProtKB-KW"/>
</dbReference>
<dbReference type="GO" id="GO:0006281">
    <property type="term" value="P:DNA repair"/>
    <property type="evidence" value="ECO:0007669"/>
    <property type="project" value="UniProtKB-KW"/>
</dbReference>
<dbReference type="GO" id="GO:0006260">
    <property type="term" value="P:DNA replication"/>
    <property type="evidence" value="ECO:0007669"/>
    <property type="project" value="UniProtKB-KW"/>
</dbReference>
<dbReference type="CDD" id="cd17748">
    <property type="entry name" value="BRCT_DNA_ligase_like"/>
    <property type="match status" value="1"/>
</dbReference>
<dbReference type="CDD" id="cd00114">
    <property type="entry name" value="LIGANc"/>
    <property type="match status" value="1"/>
</dbReference>
<dbReference type="FunFam" id="1.10.150.20:FF:000007">
    <property type="entry name" value="DNA ligase"/>
    <property type="match status" value="1"/>
</dbReference>
<dbReference type="FunFam" id="2.40.50.140:FF:000490">
    <property type="entry name" value="DNA ligase"/>
    <property type="match status" value="1"/>
</dbReference>
<dbReference type="FunFam" id="3.30.470.30:FF:000001">
    <property type="entry name" value="DNA ligase"/>
    <property type="match status" value="1"/>
</dbReference>
<dbReference type="Gene3D" id="6.20.10.30">
    <property type="match status" value="1"/>
</dbReference>
<dbReference type="Gene3D" id="1.10.150.20">
    <property type="entry name" value="5' to 3' exonuclease, C-terminal subdomain"/>
    <property type="match status" value="2"/>
</dbReference>
<dbReference type="Gene3D" id="3.40.50.10190">
    <property type="entry name" value="BRCT domain"/>
    <property type="match status" value="1"/>
</dbReference>
<dbReference type="Gene3D" id="3.30.470.30">
    <property type="entry name" value="DNA ligase/mRNA capping enzyme"/>
    <property type="match status" value="1"/>
</dbReference>
<dbReference type="Gene3D" id="1.10.287.610">
    <property type="entry name" value="Helix hairpin bin"/>
    <property type="match status" value="1"/>
</dbReference>
<dbReference type="Gene3D" id="2.40.50.140">
    <property type="entry name" value="Nucleic acid-binding proteins"/>
    <property type="match status" value="1"/>
</dbReference>
<dbReference type="HAMAP" id="MF_01588">
    <property type="entry name" value="DNA_ligase_A"/>
    <property type="match status" value="1"/>
</dbReference>
<dbReference type="InterPro" id="IPR001357">
    <property type="entry name" value="BRCT_dom"/>
</dbReference>
<dbReference type="InterPro" id="IPR036420">
    <property type="entry name" value="BRCT_dom_sf"/>
</dbReference>
<dbReference type="InterPro" id="IPR041663">
    <property type="entry name" value="DisA/LigA_HHH"/>
</dbReference>
<dbReference type="InterPro" id="IPR001679">
    <property type="entry name" value="DNA_ligase"/>
</dbReference>
<dbReference type="InterPro" id="IPR018239">
    <property type="entry name" value="DNA_ligase_AS"/>
</dbReference>
<dbReference type="InterPro" id="IPR013839">
    <property type="entry name" value="DNAligase_adenylation"/>
</dbReference>
<dbReference type="InterPro" id="IPR013840">
    <property type="entry name" value="DNAligase_N"/>
</dbReference>
<dbReference type="InterPro" id="IPR012340">
    <property type="entry name" value="NA-bd_OB-fold"/>
</dbReference>
<dbReference type="InterPro" id="IPR004150">
    <property type="entry name" value="NAD_DNA_ligase_OB"/>
</dbReference>
<dbReference type="InterPro" id="IPR010994">
    <property type="entry name" value="RuvA_2-like"/>
</dbReference>
<dbReference type="NCBIfam" id="TIGR00575">
    <property type="entry name" value="dnlj"/>
    <property type="match status" value="1"/>
</dbReference>
<dbReference type="NCBIfam" id="NF005932">
    <property type="entry name" value="PRK07956.1"/>
    <property type="match status" value="1"/>
</dbReference>
<dbReference type="PANTHER" id="PTHR23389">
    <property type="entry name" value="CHROMOSOME TRANSMISSION FIDELITY FACTOR 18"/>
    <property type="match status" value="1"/>
</dbReference>
<dbReference type="PANTHER" id="PTHR23389:SF9">
    <property type="entry name" value="DNA LIGASE"/>
    <property type="match status" value="1"/>
</dbReference>
<dbReference type="Pfam" id="PF00533">
    <property type="entry name" value="BRCT"/>
    <property type="match status" value="1"/>
</dbReference>
<dbReference type="Pfam" id="PF01653">
    <property type="entry name" value="DNA_ligase_aden"/>
    <property type="match status" value="1"/>
</dbReference>
<dbReference type="Pfam" id="PF03120">
    <property type="entry name" value="DNA_ligase_OB"/>
    <property type="match status" value="1"/>
</dbReference>
<dbReference type="Pfam" id="PF12826">
    <property type="entry name" value="HHH_2"/>
    <property type="match status" value="1"/>
</dbReference>
<dbReference type="PIRSF" id="PIRSF001604">
    <property type="entry name" value="LigA"/>
    <property type="match status" value="1"/>
</dbReference>
<dbReference type="SMART" id="SM00292">
    <property type="entry name" value="BRCT"/>
    <property type="match status" value="1"/>
</dbReference>
<dbReference type="SMART" id="SM00532">
    <property type="entry name" value="LIGANc"/>
    <property type="match status" value="1"/>
</dbReference>
<dbReference type="SUPFAM" id="SSF52113">
    <property type="entry name" value="BRCT domain"/>
    <property type="match status" value="1"/>
</dbReference>
<dbReference type="SUPFAM" id="SSF56091">
    <property type="entry name" value="DNA ligase/mRNA capping enzyme, catalytic domain"/>
    <property type="match status" value="1"/>
</dbReference>
<dbReference type="SUPFAM" id="SSF50249">
    <property type="entry name" value="Nucleic acid-binding proteins"/>
    <property type="match status" value="1"/>
</dbReference>
<dbReference type="SUPFAM" id="SSF47781">
    <property type="entry name" value="RuvA domain 2-like"/>
    <property type="match status" value="1"/>
</dbReference>
<dbReference type="PROSITE" id="PS50172">
    <property type="entry name" value="BRCT"/>
    <property type="match status" value="1"/>
</dbReference>
<dbReference type="PROSITE" id="PS01055">
    <property type="entry name" value="DNA_LIGASE_N1"/>
    <property type="match status" value="1"/>
</dbReference>
<sequence>MMARAAKSKPLRDVAELTKAQAKVELMRLALELEGHDKRYYQDDAPTVTDAEYDALRQRFNAIEKRFPEFVSAESPSQKVGAAPSGRFRKVRHAVPMLSLDNAFAEEDVRDFVGRIVRFLKLDDDKIDFSAEPKIDGLSMSLRYEGGELVTAATRGDGAEGEDVTANIRTLEDVPQKLKGRNVPDICEVRGEVYMTKKAFLALNERQKAAGDTIFANPRNSAAGSLRQKDPTITASRPLGFFAYAWGEMSAMPEETQTGMIHWFERCGFKTNPLTRLCHSVEELIAFHQRIEEERAELDYDIDGVVYKVDRIDWQERLGFVSRTPRWGIAHKFPAEQAMTVLRDIEIQVGRTGSFTPVGKLEPVGVGGVIVQNVTLHNEDYIKGIGNKGEVLREGRDIRIGDTVVIQRAGDVIPQVVDVVLDKRPKTAKEFHFPKTCPCPLHTDVTREETAAGEEGSRARCTGEFACPYQKIEHLKLFVSRRAFDIDGLGEKQLQYFFDEGFVKEPADIFTLEKRNAKLKLEEIEGYGATSVRNLFAAIESRRRIALERFVYALGMRHVGETTALALARGYGSWEAFHDACLKVAKGDEEAMADMDALDQIGDTVIKSIADYFGESHNRGIVERLTKEVEIVDAEKPKSNSAVAGKTVVFTGSLEKMTRDEAKATAERLGAKVSGSVSKKTDLVVAGPGAGSKLAEANKHGVKVLTEDEWLKLIGE</sequence>
<accession>Q89FV8</accession>